<gene>
    <name type="primary">yagP</name>
    <name type="ordered locus">b4695</name>
    <name type="ordered locus">JW0276</name>
</gene>
<reference key="1">
    <citation type="journal article" date="1997" name="Science">
        <title>The complete genome sequence of Escherichia coli K-12.</title>
        <authorList>
            <person name="Blattner F.R."/>
            <person name="Plunkett G. III"/>
            <person name="Bloch C.A."/>
            <person name="Perna N.T."/>
            <person name="Burland V."/>
            <person name="Riley M."/>
            <person name="Collado-Vides J."/>
            <person name="Glasner J.D."/>
            <person name="Rode C.K."/>
            <person name="Mayhew G.F."/>
            <person name="Gregor J."/>
            <person name="Davis N.W."/>
            <person name="Kirkpatrick H.A."/>
            <person name="Goeden M.A."/>
            <person name="Rose D.J."/>
            <person name="Mau B."/>
            <person name="Shao Y."/>
        </authorList>
    </citation>
    <scope>NUCLEOTIDE SEQUENCE [LARGE SCALE GENOMIC DNA]</scope>
    <source>
        <strain>K12 / MG1655 / ATCC 47076</strain>
    </source>
</reference>
<reference key="2">
    <citation type="journal article" date="2006" name="Mol. Syst. Biol.">
        <title>Highly accurate genome sequences of Escherichia coli K-12 strains MG1655 and W3110.</title>
        <authorList>
            <person name="Hayashi K."/>
            <person name="Morooka N."/>
            <person name="Yamamoto Y."/>
            <person name="Fujita K."/>
            <person name="Isono K."/>
            <person name="Choi S."/>
            <person name="Ohtsubo E."/>
            <person name="Baba T."/>
            <person name="Wanner B.L."/>
            <person name="Mori H."/>
            <person name="Horiuchi T."/>
        </authorList>
    </citation>
    <scope>NUCLEOTIDE SEQUENCE [LARGE SCALE GENOMIC DNA]</scope>
    <source>
        <strain>K12 / W3110 / ATCC 27325 / DSM 5911</strain>
    </source>
</reference>
<feature type="chain" id="PRO_0000168561" description="Putative LysR family substrate binding domain-containing protein YagP">
    <location>
        <begin position="1"/>
        <end position="136"/>
    </location>
</feature>
<name>YAGP_ECOLI</name>
<sequence>MPAPVVLILAAGRGECFLASGGNTHKCIGWRQSPEVAPYRWPFEENGRTFDLAIEPQITTNDLRLMLRLALAGGGITIATQETFRPYIESGKLVSLLDDFLPQFPGFYLYFPQRRNIAPKLRALIDYVKEWRQQLA</sequence>
<keyword id="KW-1185">Reference proteome</keyword>
<organism>
    <name type="scientific">Escherichia coli (strain K12)</name>
    <dbReference type="NCBI Taxonomy" id="83333"/>
    <lineage>
        <taxon>Bacteria</taxon>
        <taxon>Pseudomonadati</taxon>
        <taxon>Pseudomonadota</taxon>
        <taxon>Gammaproteobacteria</taxon>
        <taxon>Enterobacterales</taxon>
        <taxon>Enterobacteriaceae</taxon>
        <taxon>Escherichia</taxon>
    </lineage>
</organism>
<proteinExistence type="inferred from homology"/>
<accession>P75684</accession>
<accession>A0A385XJC2</accession>
<accession>Q2MCE0</accession>
<comment type="miscellaneous">
    <text evidence="1">Encodes the substrate-binding domain of a transcriptional regulator.</text>
</comment>
<comment type="similarity">
    <text evidence="1">Belongs to the LysR transcriptional regulatory family.</text>
</comment>
<protein>
    <recommendedName>
        <fullName>Putative LysR family substrate binding domain-containing protein YagP</fullName>
    </recommendedName>
</protein>
<evidence type="ECO:0000305" key="1"/>
<dbReference type="EMBL" id="U00096">
    <property type="protein sequence ID" value="AYC08174.1"/>
    <property type="molecule type" value="Genomic_DNA"/>
</dbReference>
<dbReference type="EMBL" id="AP009048">
    <property type="protein sequence ID" value="BAE76066.1"/>
    <property type="molecule type" value="Genomic_DNA"/>
</dbReference>
<dbReference type="PIR" id="B64754">
    <property type="entry name" value="B64754"/>
</dbReference>
<dbReference type="SMR" id="P75684"/>
<dbReference type="BioGRID" id="4262063">
    <property type="interactions" value="24"/>
</dbReference>
<dbReference type="FunCoup" id="P75684">
    <property type="interactions" value="19"/>
</dbReference>
<dbReference type="IntAct" id="P75684">
    <property type="interactions" value="6"/>
</dbReference>
<dbReference type="EnsemblBacteria" id="AYC08174">
    <property type="protein sequence ID" value="AYC08174"/>
    <property type="gene ID" value="b0282"/>
</dbReference>
<dbReference type="KEGG" id="ecj:JW0276"/>
<dbReference type="KEGG" id="ecoc:C3026_01375"/>
<dbReference type="KEGG" id="ecoc:C3026_24010"/>
<dbReference type="PATRIC" id="fig|1411691.4.peg.1996"/>
<dbReference type="EchoBASE" id="EB3325"/>
<dbReference type="eggNOG" id="COG0583">
    <property type="taxonomic scope" value="Bacteria"/>
</dbReference>
<dbReference type="HOGENOM" id="CLU_039613_34_0_6"/>
<dbReference type="InParanoid" id="P75684"/>
<dbReference type="OMA" id="HYPGRRN"/>
<dbReference type="OrthoDB" id="9813056at2"/>
<dbReference type="PhylomeDB" id="P75684"/>
<dbReference type="BioCyc" id="EcoCyc:G6153-MONOMER"/>
<dbReference type="PRO" id="PR:P75684"/>
<dbReference type="Proteomes" id="UP000000625">
    <property type="component" value="Chromosome"/>
</dbReference>
<dbReference type="Gene3D" id="3.40.190.10">
    <property type="entry name" value="Periplasmic binding protein-like II"/>
    <property type="match status" value="2"/>
</dbReference>
<dbReference type="InterPro" id="IPR005119">
    <property type="entry name" value="LysR_subst-bd"/>
</dbReference>
<dbReference type="PANTHER" id="PTHR30537">
    <property type="entry name" value="HTH-TYPE TRANSCRIPTIONAL REGULATOR"/>
    <property type="match status" value="1"/>
</dbReference>
<dbReference type="PANTHER" id="PTHR30537:SF1">
    <property type="entry name" value="HTH-TYPE TRANSCRIPTIONAL REGULATOR PGRR"/>
    <property type="match status" value="1"/>
</dbReference>
<dbReference type="Pfam" id="PF03466">
    <property type="entry name" value="LysR_substrate"/>
    <property type="match status" value="1"/>
</dbReference>
<dbReference type="SUPFAM" id="SSF53850">
    <property type="entry name" value="Periplasmic binding protein-like II"/>
    <property type="match status" value="1"/>
</dbReference>